<gene>
    <name evidence="1" type="primary">rplD</name>
    <name type="ordered locus">Nwi_1365</name>
</gene>
<proteinExistence type="inferred from homology"/>
<protein>
    <recommendedName>
        <fullName evidence="1">Large ribosomal subunit protein uL4</fullName>
    </recommendedName>
    <alternativeName>
        <fullName evidence="2">50S ribosomal protein L4</fullName>
    </alternativeName>
</protein>
<dbReference type="EMBL" id="CP000115">
    <property type="protein sequence ID" value="ABA04626.1"/>
    <property type="molecule type" value="Genomic_DNA"/>
</dbReference>
<dbReference type="RefSeq" id="WP_011314642.1">
    <property type="nucleotide sequence ID" value="NC_007406.1"/>
</dbReference>
<dbReference type="SMR" id="Q3SSW5"/>
<dbReference type="STRING" id="323098.Nwi_1365"/>
<dbReference type="KEGG" id="nwi:Nwi_1365"/>
<dbReference type="eggNOG" id="COG0088">
    <property type="taxonomic scope" value="Bacteria"/>
</dbReference>
<dbReference type="HOGENOM" id="CLU_041575_5_2_5"/>
<dbReference type="OrthoDB" id="9803201at2"/>
<dbReference type="Proteomes" id="UP000002531">
    <property type="component" value="Chromosome"/>
</dbReference>
<dbReference type="GO" id="GO:1990904">
    <property type="term" value="C:ribonucleoprotein complex"/>
    <property type="evidence" value="ECO:0007669"/>
    <property type="project" value="UniProtKB-KW"/>
</dbReference>
<dbReference type="GO" id="GO:0005840">
    <property type="term" value="C:ribosome"/>
    <property type="evidence" value="ECO:0007669"/>
    <property type="project" value="UniProtKB-KW"/>
</dbReference>
<dbReference type="GO" id="GO:0019843">
    <property type="term" value="F:rRNA binding"/>
    <property type="evidence" value="ECO:0007669"/>
    <property type="project" value="UniProtKB-UniRule"/>
</dbReference>
<dbReference type="GO" id="GO:0003735">
    <property type="term" value="F:structural constituent of ribosome"/>
    <property type="evidence" value="ECO:0007669"/>
    <property type="project" value="InterPro"/>
</dbReference>
<dbReference type="GO" id="GO:0006412">
    <property type="term" value="P:translation"/>
    <property type="evidence" value="ECO:0007669"/>
    <property type="project" value="UniProtKB-UniRule"/>
</dbReference>
<dbReference type="Gene3D" id="3.40.1370.10">
    <property type="match status" value="1"/>
</dbReference>
<dbReference type="HAMAP" id="MF_01328_B">
    <property type="entry name" value="Ribosomal_uL4_B"/>
    <property type="match status" value="1"/>
</dbReference>
<dbReference type="InterPro" id="IPR002136">
    <property type="entry name" value="Ribosomal_uL4"/>
</dbReference>
<dbReference type="InterPro" id="IPR013005">
    <property type="entry name" value="Ribosomal_uL4-like"/>
</dbReference>
<dbReference type="InterPro" id="IPR023574">
    <property type="entry name" value="Ribosomal_uL4_dom_sf"/>
</dbReference>
<dbReference type="NCBIfam" id="TIGR03953">
    <property type="entry name" value="rplD_bact"/>
    <property type="match status" value="1"/>
</dbReference>
<dbReference type="PANTHER" id="PTHR10746">
    <property type="entry name" value="50S RIBOSOMAL PROTEIN L4"/>
    <property type="match status" value="1"/>
</dbReference>
<dbReference type="PANTHER" id="PTHR10746:SF6">
    <property type="entry name" value="LARGE RIBOSOMAL SUBUNIT PROTEIN UL4M"/>
    <property type="match status" value="1"/>
</dbReference>
<dbReference type="Pfam" id="PF00573">
    <property type="entry name" value="Ribosomal_L4"/>
    <property type="match status" value="1"/>
</dbReference>
<dbReference type="SUPFAM" id="SSF52166">
    <property type="entry name" value="Ribosomal protein L4"/>
    <property type="match status" value="1"/>
</dbReference>
<comment type="function">
    <text evidence="1">One of the primary rRNA binding proteins, this protein initially binds near the 5'-end of the 23S rRNA. It is important during the early stages of 50S assembly. It makes multiple contacts with different domains of the 23S rRNA in the assembled 50S subunit and ribosome.</text>
</comment>
<comment type="function">
    <text evidence="1">Forms part of the polypeptide exit tunnel.</text>
</comment>
<comment type="subunit">
    <text evidence="1">Part of the 50S ribosomal subunit.</text>
</comment>
<comment type="similarity">
    <text evidence="1">Belongs to the universal ribosomal protein uL4 family.</text>
</comment>
<reference key="1">
    <citation type="journal article" date="2006" name="Appl. Environ. Microbiol.">
        <title>Genome sequence of the chemolithoautotrophic nitrite-oxidizing bacterium Nitrobacter winogradskyi Nb-255.</title>
        <authorList>
            <person name="Starkenburg S.R."/>
            <person name="Chain P.S.G."/>
            <person name="Sayavedra-Soto L.A."/>
            <person name="Hauser L."/>
            <person name="Land M.L."/>
            <person name="Larimer F.W."/>
            <person name="Malfatti S.A."/>
            <person name="Klotz M.G."/>
            <person name="Bottomley P.J."/>
            <person name="Arp D.J."/>
            <person name="Hickey W.J."/>
        </authorList>
    </citation>
    <scope>NUCLEOTIDE SEQUENCE [LARGE SCALE GENOMIC DNA]</scope>
    <source>
        <strain>ATCC 25391 / DSM 10237 / CIP 104748 / NCIMB 11846 / Nb-255</strain>
    </source>
</reference>
<name>RL4_NITWN</name>
<feature type="chain" id="PRO_0000242403" description="Large ribosomal subunit protein uL4">
    <location>
        <begin position="1"/>
        <end position="206"/>
    </location>
</feature>
<accession>Q3SSW5</accession>
<organism>
    <name type="scientific">Nitrobacter winogradskyi (strain ATCC 25391 / DSM 10237 / CIP 104748 / NCIMB 11846 / Nb-255)</name>
    <dbReference type="NCBI Taxonomy" id="323098"/>
    <lineage>
        <taxon>Bacteria</taxon>
        <taxon>Pseudomonadati</taxon>
        <taxon>Pseudomonadota</taxon>
        <taxon>Alphaproteobacteria</taxon>
        <taxon>Hyphomicrobiales</taxon>
        <taxon>Nitrobacteraceae</taxon>
        <taxon>Nitrobacter</taxon>
    </lineage>
</organism>
<sequence length="206" mass="22192">MELNVTTLEGKAAGSVHLSDGIFGLEPRKDLIQRCVNWQLAKSQAGTHKTKGRAEIWRTGKKLFKQKGTGNARHGSARAPQFRGGGRAFGPVVRSHAHDLPKKVRALALRHALSAKAKDGGLIVIDSVELKEAKTKALMGHFSSLGLTSALIIDGAQVHAGFATAARNIPNIDVLPIQGINVYDILRRQKLVLTKAAVDALEARFK</sequence>
<evidence type="ECO:0000255" key="1">
    <source>
        <dbReference type="HAMAP-Rule" id="MF_01328"/>
    </source>
</evidence>
<evidence type="ECO:0000305" key="2"/>
<keyword id="KW-1185">Reference proteome</keyword>
<keyword id="KW-0687">Ribonucleoprotein</keyword>
<keyword id="KW-0689">Ribosomal protein</keyword>
<keyword id="KW-0694">RNA-binding</keyword>
<keyword id="KW-0699">rRNA-binding</keyword>